<name>MYG_CYPCA</name>
<accession>P02204</accession>
<dbReference type="EC" id="1.7.-.-" evidence="1"/>
<dbReference type="EC" id="1.11.1.-" evidence="1"/>
<dbReference type="PIR" id="A02525">
    <property type="entry name" value="MYCA"/>
</dbReference>
<dbReference type="SMR" id="P02204"/>
<dbReference type="Proteomes" id="UP000694384">
    <property type="component" value="Unplaced"/>
</dbReference>
<dbReference type="Proteomes" id="UP000694427">
    <property type="component" value="Unplaced"/>
</dbReference>
<dbReference type="Proteomes" id="UP000694700">
    <property type="component" value="Unplaced"/>
</dbReference>
<dbReference type="Proteomes" id="UP000694701">
    <property type="component" value="Unplaced"/>
</dbReference>
<dbReference type="Proteomes" id="UP001155660">
    <property type="component" value="Unplaced"/>
</dbReference>
<dbReference type="GO" id="GO:0070062">
    <property type="term" value="C:extracellular exosome"/>
    <property type="evidence" value="ECO:0007669"/>
    <property type="project" value="TreeGrafter"/>
</dbReference>
<dbReference type="GO" id="GO:0016528">
    <property type="term" value="C:sarcoplasm"/>
    <property type="evidence" value="ECO:0000250"/>
    <property type="project" value="UniProtKB"/>
</dbReference>
<dbReference type="GO" id="GO:0020037">
    <property type="term" value="F:heme binding"/>
    <property type="evidence" value="ECO:0007669"/>
    <property type="project" value="InterPro"/>
</dbReference>
<dbReference type="GO" id="GO:0046872">
    <property type="term" value="F:metal ion binding"/>
    <property type="evidence" value="ECO:0007669"/>
    <property type="project" value="UniProtKB-KW"/>
</dbReference>
<dbReference type="GO" id="GO:0098809">
    <property type="term" value="F:nitrite reductase activity"/>
    <property type="evidence" value="ECO:0000250"/>
    <property type="project" value="UniProtKB"/>
</dbReference>
<dbReference type="GO" id="GO:0019825">
    <property type="term" value="F:oxygen binding"/>
    <property type="evidence" value="ECO:0007669"/>
    <property type="project" value="InterPro"/>
</dbReference>
<dbReference type="GO" id="GO:0005344">
    <property type="term" value="F:oxygen carrier activity"/>
    <property type="evidence" value="ECO:0000250"/>
    <property type="project" value="UniProtKB"/>
</dbReference>
<dbReference type="GO" id="GO:0004601">
    <property type="term" value="F:peroxidase activity"/>
    <property type="evidence" value="ECO:0000250"/>
    <property type="project" value="UniProtKB"/>
</dbReference>
<dbReference type="GO" id="GO:0019430">
    <property type="term" value="P:removal of superoxide radicals"/>
    <property type="evidence" value="ECO:0000250"/>
    <property type="project" value="UniProtKB"/>
</dbReference>
<dbReference type="Gene3D" id="6.10.140.2100">
    <property type="match status" value="1"/>
</dbReference>
<dbReference type="Gene3D" id="6.10.140.2110">
    <property type="match status" value="1"/>
</dbReference>
<dbReference type="InterPro" id="IPR000971">
    <property type="entry name" value="Globin"/>
</dbReference>
<dbReference type="InterPro" id="IPR009050">
    <property type="entry name" value="Globin-like_sf"/>
</dbReference>
<dbReference type="InterPro" id="IPR002335">
    <property type="entry name" value="Myoglobin"/>
</dbReference>
<dbReference type="PANTHER" id="PTHR47132">
    <property type="entry name" value="MYOGLOBIN"/>
    <property type="match status" value="1"/>
</dbReference>
<dbReference type="PANTHER" id="PTHR47132:SF1">
    <property type="entry name" value="MYOGLOBIN"/>
    <property type="match status" value="1"/>
</dbReference>
<dbReference type="Pfam" id="PF00042">
    <property type="entry name" value="Globin"/>
    <property type="match status" value="1"/>
</dbReference>
<dbReference type="PRINTS" id="PR00613">
    <property type="entry name" value="MYOGLOBIN"/>
</dbReference>
<dbReference type="SUPFAM" id="SSF46458">
    <property type="entry name" value="Globin-like"/>
    <property type="match status" value="1"/>
</dbReference>
<dbReference type="PROSITE" id="PS01033">
    <property type="entry name" value="GLOBIN"/>
    <property type="match status" value="1"/>
</dbReference>
<feature type="initiator methionine" description="Removed" evidence="6">
    <location>
        <position position="1"/>
    </location>
</feature>
<feature type="chain" id="PRO_0000053364" description="Myoglobin">
    <location>
        <begin position="2"/>
        <end position="147"/>
    </location>
</feature>
<feature type="domain" description="Globin" evidence="5">
    <location>
        <begin position="2"/>
        <end position="141"/>
    </location>
</feature>
<feature type="binding site" evidence="4">
    <location>
        <position position="60"/>
    </location>
    <ligand>
        <name>nitrite</name>
        <dbReference type="ChEBI" id="CHEBI:16301"/>
    </ligand>
</feature>
<feature type="binding site" evidence="3 5">
    <location>
        <position position="60"/>
    </location>
    <ligand>
        <name>O2</name>
        <dbReference type="ChEBI" id="CHEBI:15379"/>
    </ligand>
</feature>
<feature type="binding site" description="proximal binding residue" evidence="1">
    <location>
        <position position="89"/>
    </location>
    <ligand>
        <name>heme b</name>
        <dbReference type="ChEBI" id="CHEBI:60344"/>
    </ligand>
    <ligandPart>
        <name>Fe</name>
        <dbReference type="ChEBI" id="CHEBI:18248"/>
    </ligandPart>
</feature>
<evidence type="ECO:0000250" key="1">
    <source>
        <dbReference type="UniProtKB" id="P02144"/>
    </source>
</evidence>
<evidence type="ECO:0000250" key="2">
    <source>
        <dbReference type="UniProtKB" id="P02185"/>
    </source>
</evidence>
<evidence type="ECO:0000250" key="3">
    <source>
        <dbReference type="UniProtKB" id="P02189"/>
    </source>
</evidence>
<evidence type="ECO:0000250" key="4">
    <source>
        <dbReference type="UniProtKB" id="P68082"/>
    </source>
</evidence>
<evidence type="ECO:0000255" key="5">
    <source>
        <dbReference type="PROSITE-ProRule" id="PRU00238"/>
    </source>
</evidence>
<evidence type="ECO:0000269" key="6">
    <source ref="1"/>
</evidence>
<proteinExistence type="evidence at protein level"/>
<protein>
    <recommendedName>
        <fullName>Myoglobin</fullName>
    </recommendedName>
    <alternativeName>
        <fullName evidence="1">Nitrite reductase MB</fullName>
        <ecNumber evidence="1">1.7.-.-</ecNumber>
    </alternativeName>
    <alternativeName>
        <fullName evidence="1">Pseudoperoxidase MB</fullName>
        <ecNumber evidence="1">1.11.1.-</ecNumber>
    </alternativeName>
</protein>
<comment type="function">
    <text evidence="1">Monomeric heme protein which primary function is to store oxygen and facilitate its diffusion within muscle tissues. Reversibly binds oxygen through a pentacoordinated heme iron and enables its timely and efficient release as needed during periods of heightened demand. Depending on the oxidative conditions of tissues and cells, and in addition to its ability to bind oxygen, it also has a nitrite reductase activity whereby it regulates the production of bioactive nitric oxide. Under stress conditions, like hypoxia and anoxia, it also protects cells against reactive oxygen species thanks to its pseudoperoxidase activity.</text>
</comment>
<comment type="catalytic activity">
    <reaction evidence="1">
        <text>Fe(III)-heme b-[protein] + nitric oxide + H2O = Fe(II)-heme b-[protein] + nitrite + 2 H(+)</text>
        <dbReference type="Rhea" id="RHEA:77711"/>
        <dbReference type="Rhea" id="RHEA-COMP:18975"/>
        <dbReference type="Rhea" id="RHEA-COMP:18976"/>
        <dbReference type="ChEBI" id="CHEBI:15377"/>
        <dbReference type="ChEBI" id="CHEBI:15378"/>
        <dbReference type="ChEBI" id="CHEBI:16301"/>
        <dbReference type="ChEBI" id="CHEBI:16480"/>
        <dbReference type="ChEBI" id="CHEBI:55376"/>
        <dbReference type="ChEBI" id="CHEBI:60344"/>
    </reaction>
    <physiologicalReaction direction="right-to-left" evidence="1">
        <dbReference type="Rhea" id="RHEA:77713"/>
    </physiologicalReaction>
</comment>
<comment type="catalytic activity">
    <reaction evidence="1">
        <text>H2O2 + AH2 = A + 2 H2O</text>
        <dbReference type="Rhea" id="RHEA:30275"/>
        <dbReference type="ChEBI" id="CHEBI:13193"/>
        <dbReference type="ChEBI" id="CHEBI:15377"/>
        <dbReference type="ChEBI" id="CHEBI:16240"/>
        <dbReference type="ChEBI" id="CHEBI:17499"/>
    </reaction>
</comment>
<comment type="subunit">
    <text evidence="2">Monomeric.</text>
</comment>
<comment type="subcellular location">
    <subcellularLocation>
        <location evidence="1">Cytoplasm</location>
        <location evidence="1">Sarcoplasm</location>
    </subcellularLocation>
</comment>
<comment type="similarity">
    <text evidence="5">Belongs to the globin family.</text>
</comment>
<reference key="1">
    <citation type="submission" date="1980-07" db="PIR data bank">
        <authorList>
            <person name="Romero-Herrera A.E."/>
        </authorList>
    </citation>
    <scope>PROTEIN SEQUENCE OF 2-147</scope>
</reference>
<organism>
    <name type="scientific">Cyprinus carpio</name>
    <name type="common">Common carp</name>
    <dbReference type="NCBI Taxonomy" id="7962"/>
    <lineage>
        <taxon>Eukaryota</taxon>
        <taxon>Metazoa</taxon>
        <taxon>Chordata</taxon>
        <taxon>Craniata</taxon>
        <taxon>Vertebrata</taxon>
        <taxon>Euteleostomi</taxon>
        <taxon>Actinopterygii</taxon>
        <taxon>Neopterygii</taxon>
        <taxon>Teleostei</taxon>
        <taxon>Ostariophysi</taxon>
        <taxon>Cypriniformes</taxon>
        <taxon>Cyprinidae</taxon>
        <taxon>Cyprininae</taxon>
        <taxon>Cyprinus</taxon>
    </lineage>
</organism>
<sequence length="147" mass="15776">MHDAELVLKCWGGVEADFEGTGGEVLTRLFKQHPETQKLFPKFVGIASNELAGNAAVKAHGATVLKKLGELLKARGDHAAILKPLATTHANTHKIALNNFRLITEVLVKVMAEKAGLDAGGQSALRRVMDVVIGDIDTYYKEIGFAG</sequence>
<gene>
    <name type="primary">mb</name>
</gene>
<keyword id="KW-0963">Cytoplasm</keyword>
<keyword id="KW-0903">Direct protein sequencing</keyword>
<keyword id="KW-0349">Heme</keyword>
<keyword id="KW-0408">Iron</keyword>
<keyword id="KW-0479">Metal-binding</keyword>
<keyword id="KW-0514">Muscle protein</keyword>
<keyword id="KW-0560">Oxidoreductase</keyword>
<keyword id="KW-0561">Oxygen transport</keyword>
<keyword id="KW-1185">Reference proteome</keyword>
<keyword id="KW-0813">Transport</keyword>